<gene>
    <name evidence="1" type="primary">cpfC</name>
    <name type="ordered locus">SA1651</name>
</gene>
<proteinExistence type="evidence at protein level"/>
<organism>
    <name type="scientific">Staphylococcus aureus (strain N315)</name>
    <dbReference type="NCBI Taxonomy" id="158879"/>
    <lineage>
        <taxon>Bacteria</taxon>
        <taxon>Bacillati</taxon>
        <taxon>Bacillota</taxon>
        <taxon>Bacilli</taxon>
        <taxon>Bacillales</taxon>
        <taxon>Staphylococcaceae</taxon>
        <taxon>Staphylococcus</taxon>
    </lineage>
</organism>
<keyword id="KW-0963">Cytoplasm</keyword>
<keyword id="KW-0350">Heme biosynthesis</keyword>
<keyword id="KW-0408">Iron</keyword>
<keyword id="KW-0456">Lyase</keyword>
<keyword id="KW-0479">Metal-binding</keyword>
<keyword id="KW-0627">Porphyrin biosynthesis</keyword>
<dbReference type="EC" id="4.99.1.9" evidence="1"/>
<dbReference type="EMBL" id="BA000018">
    <property type="protein sequence ID" value="BAB42919.1"/>
    <property type="molecule type" value="Genomic_DNA"/>
</dbReference>
<dbReference type="PIR" id="H89969">
    <property type="entry name" value="H89969"/>
</dbReference>
<dbReference type="SMR" id="P64125"/>
<dbReference type="EnsemblBacteria" id="BAB42919">
    <property type="protein sequence ID" value="BAB42919"/>
    <property type="gene ID" value="BAB42919"/>
</dbReference>
<dbReference type="KEGG" id="sau:SA1651"/>
<dbReference type="HOGENOM" id="CLU_018884_2_1_9"/>
<dbReference type="UniPathway" id="UPA00252"/>
<dbReference type="GO" id="GO:0005737">
    <property type="term" value="C:cytoplasm"/>
    <property type="evidence" value="ECO:0007669"/>
    <property type="project" value="UniProtKB-SubCell"/>
</dbReference>
<dbReference type="GO" id="GO:0004325">
    <property type="term" value="F:ferrochelatase activity"/>
    <property type="evidence" value="ECO:0007669"/>
    <property type="project" value="UniProtKB-UniRule"/>
</dbReference>
<dbReference type="GO" id="GO:0046872">
    <property type="term" value="F:metal ion binding"/>
    <property type="evidence" value="ECO:0007669"/>
    <property type="project" value="UniProtKB-KW"/>
</dbReference>
<dbReference type="GO" id="GO:0006783">
    <property type="term" value="P:heme biosynthetic process"/>
    <property type="evidence" value="ECO:0007669"/>
    <property type="project" value="UniProtKB-UniRule"/>
</dbReference>
<dbReference type="CDD" id="cd00419">
    <property type="entry name" value="Ferrochelatase_C"/>
    <property type="match status" value="1"/>
</dbReference>
<dbReference type="CDD" id="cd03411">
    <property type="entry name" value="Ferrochelatase_N"/>
    <property type="match status" value="1"/>
</dbReference>
<dbReference type="FunFam" id="3.40.50.1400:FF:000009">
    <property type="entry name" value="Ferrochelatase"/>
    <property type="match status" value="1"/>
</dbReference>
<dbReference type="Gene3D" id="3.40.50.1400">
    <property type="match status" value="2"/>
</dbReference>
<dbReference type="HAMAP" id="MF_00323">
    <property type="entry name" value="Ferrochelatase"/>
    <property type="match status" value="1"/>
</dbReference>
<dbReference type="InterPro" id="IPR001015">
    <property type="entry name" value="Ferrochelatase"/>
</dbReference>
<dbReference type="InterPro" id="IPR019772">
    <property type="entry name" value="Ferrochelatase_AS"/>
</dbReference>
<dbReference type="InterPro" id="IPR033644">
    <property type="entry name" value="Ferrochelatase_C"/>
</dbReference>
<dbReference type="InterPro" id="IPR033659">
    <property type="entry name" value="Ferrochelatase_N"/>
</dbReference>
<dbReference type="NCBIfam" id="TIGR00109">
    <property type="entry name" value="hemH"/>
    <property type="match status" value="1"/>
</dbReference>
<dbReference type="NCBIfam" id="NF009095">
    <property type="entry name" value="PRK12435.1"/>
    <property type="match status" value="1"/>
</dbReference>
<dbReference type="PANTHER" id="PTHR11108">
    <property type="entry name" value="FERROCHELATASE"/>
    <property type="match status" value="1"/>
</dbReference>
<dbReference type="PANTHER" id="PTHR11108:SF1">
    <property type="entry name" value="FERROCHELATASE, MITOCHONDRIAL"/>
    <property type="match status" value="1"/>
</dbReference>
<dbReference type="Pfam" id="PF00762">
    <property type="entry name" value="Ferrochelatase"/>
    <property type="match status" value="1"/>
</dbReference>
<dbReference type="SUPFAM" id="SSF53800">
    <property type="entry name" value="Chelatase"/>
    <property type="match status" value="1"/>
</dbReference>
<dbReference type="PROSITE" id="PS00534">
    <property type="entry name" value="FERROCHELATASE"/>
    <property type="match status" value="1"/>
</dbReference>
<comment type="function">
    <text evidence="1">Involved in coproporphyrin-dependent heme b biosynthesis. Catalyzes the insertion of ferrous iron into coproporphyrin III to form Fe-coproporphyrin III.</text>
</comment>
<comment type="catalytic activity">
    <reaction evidence="1">
        <text>Fe-coproporphyrin III + 2 H(+) = coproporphyrin III + Fe(2+)</text>
        <dbReference type="Rhea" id="RHEA:49572"/>
        <dbReference type="ChEBI" id="CHEBI:15378"/>
        <dbReference type="ChEBI" id="CHEBI:29033"/>
        <dbReference type="ChEBI" id="CHEBI:68438"/>
        <dbReference type="ChEBI" id="CHEBI:131725"/>
        <dbReference type="EC" id="4.99.1.9"/>
    </reaction>
    <physiologicalReaction direction="right-to-left" evidence="1">
        <dbReference type="Rhea" id="RHEA:49574"/>
    </physiologicalReaction>
</comment>
<comment type="pathway">
    <text evidence="1">Porphyrin-containing compound metabolism; protoheme biosynthesis.</text>
</comment>
<comment type="subcellular location">
    <subcellularLocation>
        <location evidence="1">Cytoplasm</location>
    </subcellularLocation>
</comment>
<comment type="similarity">
    <text evidence="1">Belongs to the ferrochelatase family.</text>
</comment>
<sequence length="307" mass="35056">MTKKMGLLVMAYGTPYKESDIEPYYTDIRHGKRPSEEELQDLKDRYEFIGGLSPLAGTTDDQADALVSALNKAYADVEFKLYLGLKHISPFIEDAVEQMHNDGITEAITVVLAPHYSSFSVGSYDKRADEEAAKYGIQLTHVKHYYEQPKFIEYWTNKVNETLAQIPEEEHKDTVLVVSAHSLPKGLIEKNNDPYPQELEHTALLIKEQSNIEHIAIGWQSEGNTGTPWLGPDVQDLTRDLYEKHQYKNFIYTPVGFVCEHLEVLYDNDYECKVVCDDIGANYYRPKMPNTHPLFIGAIVDEIKSIF</sequence>
<reference key="1">
    <citation type="journal article" date="2001" name="Lancet">
        <title>Whole genome sequencing of meticillin-resistant Staphylococcus aureus.</title>
        <authorList>
            <person name="Kuroda M."/>
            <person name="Ohta T."/>
            <person name="Uchiyama I."/>
            <person name="Baba T."/>
            <person name="Yuzawa H."/>
            <person name="Kobayashi I."/>
            <person name="Cui L."/>
            <person name="Oguchi A."/>
            <person name="Aoki K."/>
            <person name="Nagai Y."/>
            <person name="Lian J.-Q."/>
            <person name="Ito T."/>
            <person name="Kanamori M."/>
            <person name="Matsumaru H."/>
            <person name="Maruyama A."/>
            <person name="Murakami H."/>
            <person name="Hosoyama A."/>
            <person name="Mizutani-Ui Y."/>
            <person name="Takahashi N.K."/>
            <person name="Sawano T."/>
            <person name="Inoue R."/>
            <person name="Kaito C."/>
            <person name="Sekimizu K."/>
            <person name="Hirakawa H."/>
            <person name="Kuhara S."/>
            <person name="Goto S."/>
            <person name="Yabuzaki J."/>
            <person name="Kanehisa M."/>
            <person name="Yamashita A."/>
            <person name="Oshima K."/>
            <person name="Furuya K."/>
            <person name="Yoshino C."/>
            <person name="Shiba T."/>
            <person name="Hattori M."/>
            <person name="Ogasawara N."/>
            <person name="Hayashi H."/>
            <person name="Hiramatsu K."/>
        </authorList>
    </citation>
    <scope>NUCLEOTIDE SEQUENCE [LARGE SCALE GENOMIC DNA]</scope>
    <source>
        <strain>N315</strain>
    </source>
</reference>
<reference key="2">
    <citation type="submission" date="2007-10" db="UniProtKB">
        <title>Shotgun proteomic analysis of total and membrane protein extracts of S. aureus strain N315.</title>
        <authorList>
            <person name="Vaezzadeh A.R."/>
            <person name="Deshusses J."/>
            <person name="Lescuyer P."/>
            <person name="Hochstrasser D.F."/>
        </authorList>
    </citation>
    <scope>IDENTIFICATION BY MASS SPECTROMETRY [LARGE SCALE ANALYSIS]</scope>
    <source>
        <strain>N315</strain>
    </source>
</reference>
<feature type="chain" id="PRO_0000175203" description="Coproporphyrin III ferrochelatase">
    <location>
        <begin position="1"/>
        <end position="307"/>
    </location>
</feature>
<feature type="binding site" description="axial binding residue" evidence="1">
    <location>
        <position position="12"/>
    </location>
    <ligand>
        <name>Fe-coproporphyrin III</name>
        <dbReference type="ChEBI" id="CHEBI:68438"/>
    </ligand>
    <ligandPart>
        <name>Fe</name>
        <dbReference type="ChEBI" id="CHEBI:18248"/>
    </ligandPart>
</feature>
<feature type="binding site" evidence="1">
    <location>
        <position position="29"/>
    </location>
    <ligand>
        <name>Fe-coproporphyrin III</name>
        <dbReference type="ChEBI" id="CHEBI:68438"/>
    </ligand>
</feature>
<feature type="binding site" evidence="1">
    <location>
        <begin position="45"/>
        <end position="46"/>
    </location>
    <ligand>
        <name>Fe-coproporphyrin III</name>
        <dbReference type="ChEBI" id="CHEBI:68438"/>
    </ligand>
</feature>
<feature type="binding site" evidence="1">
    <location>
        <position position="53"/>
    </location>
    <ligand>
        <name>Fe-coproporphyrin III</name>
        <dbReference type="ChEBI" id="CHEBI:68438"/>
    </ligand>
</feature>
<feature type="binding site" evidence="1">
    <location>
        <position position="124"/>
    </location>
    <ligand>
        <name>Fe-coproporphyrin III</name>
        <dbReference type="ChEBI" id="CHEBI:68438"/>
    </ligand>
</feature>
<feature type="binding site" evidence="1">
    <location>
        <position position="181"/>
    </location>
    <ligand>
        <name>Fe(2+)</name>
        <dbReference type="ChEBI" id="CHEBI:29033"/>
    </ligand>
</feature>
<feature type="binding site" evidence="1">
    <location>
        <position position="263"/>
    </location>
    <ligand>
        <name>Fe(2+)</name>
        <dbReference type="ChEBI" id="CHEBI:29033"/>
    </ligand>
</feature>
<accession>P64125</accession>
<accession>Q99T43</accession>
<protein>
    <recommendedName>
        <fullName evidence="1">Coproporphyrin III ferrochelatase</fullName>
        <ecNumber evidence="1">4.99.1.9</ecNumber>
    </recommendedName>
</protein>
<name>CPFC_STAAN</name>
<evidence type="ECO:0000255" key="1">
    <source>
        <dbReference type="HAMAP-Rule" id="MF_00323"/>
    </source>
</evidence>